<protein>
    <recommendedName>
        <fullName>Esterase-5C</fullName>
        <shortName>Est-5C</shortName>
        <ecNumber>3.1.1.1</ecNumber>
    </recommendedName>
    <alternativeName>
        <fullName>Carboxylic-ester hydrolase 5C</fullName>
        <shortName>Carboxylesterase-5C</shortName>
    </alternativeName>
</protein>
<comment type="catalytic activity">
    <reaction evidence="3">
        <text>a carboxylic ester + H2O = an alcohol + a carboxylate + H(+)</text>
        <dbReference type="Rhea" id="RHEA:21164"/>
        <dbReference type="ChEBI" id="CHEBI:15377"/>
        <dbReference type="ChEBI" id="CHEBI:15378"/>
        <dbReference type="ChEBI" id="CHEBI:29067"/>
        <dbReference type="ChEBI" id="CHEBI:30879"/>
        <dbReference type="ChEBI" id="CHEBI:33308"/>
        <dbReference type="EC" id="3.1.1.1"/>
    </reaction>
</comment>
<comment type="subcellular location">
    <subcellularLocation>
        <location>Secreted</location>
    </subcellularLocation>
</comment>
<comment type="similarity">
    <text evidence="4">Belongs to the type-B carboxylesterase/lipase family.</text>
</comment>
<keyword id="KW-1015">Disulfide bond</keyword>
<keyword id="KW-0325">Glycoprotein</keyword>
<keyword id="KW-0378">Hydrolase</keyword>
<keyword id="KW-0964">Secreted</keyword>
<keyword id="KW-0719">Serine esterase</keyword>
<keyword id="KW-0732">Signal</keyword>
<organism>
    <name type="scientific">Drosophila miranda</name>
    <name type="common">Fruit fly</name>
    <dbReference type="NCBI Taxonomy" id="7229"/>
    <lineage>
        <taxon>Eukaryota</taxon>
        <taxon>Metazoa</taxon>
        <taxon>Ecdysozoa</taxon>
        <taxon>Arthropoda</taxon>
        <taxon>Hexapoda</taxon>
        <taxon>Insecta</taxon>
        <taxon>Pterygota</taxon>
        <taxon>Neoptera</taxon>
        <taxon>Endopterygota</taxon>
        <taxon>Diptera</taxon>
        <taxon>Brachycera</taxon>
        <taxon>Muscomorpha</taxon>
        <taxon>Ephydroidea</taxon>
        <taxon>Drosophilidae</taxon>
        <taxon>Drosophila</taxon>
        <taxon>Sophophora</taxon>
    </lineage>
</organism>
<feature type="signal peptide" evidence="2">
    <location>
        <begin position="1"/>
        <end position="19"/>
    </location>
</feature>
<feature type="chain" id="PRO_0000008558" description="Esterase-5C">
    <location>
        <begin position="20"/>
        <end position="545"/>
    </location>
</feature>
<feature type="active site" description="Acyl-ester intermediate" evidence="3">
    <location>
        <position position="207"/>
    </location>
</feature>
<feature type="active site" description="Charge relay system" evidence="1">
    <location>
        <position position="467"/>
    </location>
</feature>
<feature type="glycosylation site" description="N-linked (GlcNAc...) asparagine" evidence="2">
    <location>
        <position position="113"/>
    </location>
</feature>
<feature type="glycosylation site" description="N-linked (GlcNAc...) asparagine" evidence="2">
    <location>
        <position position="421"/>
    </location>
</feature>
<feature type="glycosylation site" description="N-linked (GlcNAc...) asparagine" evidence="2">
    <location>
        <position position="507"/>
    </location>
</feature>
<feature type="disulfide bond" evidence="1">
    <location>
        <begin position="84"/>
        <end position="103"/>
    </location>
</feature>
<feature type="disulfide bond" evidence="1">
    <location>
        <begin position="259"/>
        <end position="271"/>
    </location>
</feature>
<feature type="disulfide bond" evidence="2">
    <location>
        <begin position="515"/>
        <end position="536"/>
    </location>
</feature>
<accession>O16169</accession>
<name>EST5C_DROMI</name>
<proteinExistence type="inferred from homology"/>
<evidence type="ECO:0000250" key="1"/>
<evidence type="ECO:0000255" key="2"/>
<evidence type="ECO:0000255" key="3">
    <source>
        <dbReference type="PROSITE-ProRule" id="PRU10039"/>
    </source>
</evidence>
<evidence type="ECO:0000305" key="4"/>
<gene>
    <name type="primary">Est-5C</name>
    <name type="synonym">Est5C</name>
</gene>
<dbReference type="EC" id="3.1.1.1"/>
<dbReference type="EMBL" id="AF016109">
    <property type="protein sequence ID" value="AAB70220.1"/>
    <property type="molecule type" value="Genomic_DNA"/>
</dbReference>
<dbReference type="SMR" id="O16169"/>
<dbReference type="ESTHER" id="dromi-est5c">
    <property type="family name" value="Carb_B_Arthropoda"/>
</dbReference>
<dbReference type="MEROPS" id="S09.947"/>
<dbReference type="GlyCosmos" id="O16169">
    <property type="glycosylation" value="3 sites, No reported glycans"/>
</dbReference>
<dbReference type="GO" id="GO:0005576">
    <property type="term" value="C:extracellular region"/>
    <property type="evidence" value="ECO:0007669"/>
    <property type="project" value="UniProtKB-SubCell"/>
</dbReference>
<dbReference type="GO" id="GO:0106435">
    <property type="term" value="F:carboxylesterase activity"/>
    <property type="evidence" value="ECO:0007669"/>
    <property type="project" value="UniProtKB-EC"/>
</dbReference>
<dbReference type="CDD" id="cd00312">
    <property type="entry name" value="Esterase_lipase"/>
    <property type="match status" value="1"/>
</dbReference>
<dbReference type="FunFam" id="3.40.50.1820:FF:000378">
    <property type="entry name" value="Carboxylic ester hydrolase"/>
    <property type="match status" value="1"/>
</dbReference>
<dbReference type="Gene3D" id="3.40.50.1820">
    <property type="entry name" value="alpha/beta hydrolase"/>
    <property type="match status" value="1"/>
</dbReference>
<dbReference type="InterPro" id="IPR029058">
    <property type="entry name" value="AB_hydrolase_fold"/>
</dbReference>
<dbReference type="InterPro" id="IPR002018">
    <property type="entry name" value="CarbesteraseB"/>
</dbReference>
<dbReference type="InterPro" id="IPR019826">
    <property type="entry name" value="Carboxylesterase_B_AS"/>
</dbReference>
<dbReference type="InterPro" id="IPR019819">
    <property type="entry name" value="Carboxylesterase_B_CS"/>
</dbReference>
<dbReference type="PANTHER" id="PTHR43142">
    <property type="entry name" value="CARBOXYLIC ESTER HYDROLASE"/>
    <property type="match status" value="1"/>
</dbReference>
<dbReference type="PANTHER" id="PTHR43142:SF1">
    <property type="entry name" value="CARBOXYLIC ESTER HYDROLASE"/>
    <property type="match status" value="1"/>
</dbReference>
<dbReference type="Pfam" id="PF00135">
    <property type="entry name" value="COesterase"/>
    <property type="match status" value="1"/>
</dbReference>
<dbReference type="SUPFAM" id="SSF53474">
    <property type="entry name" value="alpha/beta-Hydrolases"/>
    <property type="match status" value="1"/>
</dbReference>
<dbReference type="PROSITE" id="PS00122">
    <property type="entry name" value="CARBOXYLESTERASE_B_1"/>
    <property type="match status" value="1"/>
</dbReference>
<dbReference type="PROSITE" id="PS00941">
    <property type="entry name" value="CARBOXYLESTERASE_B_2"/>
    <property type="match status" value="1"/>
</dbReference>
<sequence length="545" mass="60929">MLAARLIILLSFYWLSASAIDPADPLFVDLPHGKIRGRDNGFYYSYESLPYAEPPVGELRFEAPQPYKQQWTDTFDATQPPVTCMQWNQFIFGDNKLAGVEDCLTVSIYKPKNTSQSSFPVVAHMHGGAFMFGEARQNGHENMMREGKLILVKISYRLGPLGFASTGDAGLSGNFGLKDQRLALLWIKQNIASFGGEPENIIVVGHSAGGASVHLQMLREDFAQVAKAGISFGGNAMDPWVIHRSARGRTFELGRIVGCGQASDSMELKNCLKSKPAGEIVSAVHSFLVFAYVPFAPFGPVVESPDAPEAFISQHPVDIIKSGKFAQVPWAVTYNTEDGGYNAAVLLEKQASSGRELIFDLNDHWFDWAPYLLFYRDSMTTIKDMDDYSRKLRQEYLGDRRFSVESYWDLQRLFTDVLYKNATELALDLYRKHGKSPVYAFVYDNPANTGIGQFFAKRTDVHFGTVHGDEYFLIFENLARGPEMRSDEEIISRNFLNMINDFVLSGNGTMTFGNCVLQDNVGSNKLQLLSITKNGCENLQLESFP</sequence>
<reference key="1">
    <citation type="journal article" date="1998" name="Genetics">
        <title>The role of gene conversion in determining sequence variation and divergence in the Est-5 gene family in Drosophila pseudoobscura.</title>
        <authorList>
            <person name="King L.M."/>
        </authorList>
    </citation>
    <scope>NUCLEOTIDE SEQUENCE [GENOMIC DNA]</scope>
</reference>